<comment type="function">
    <text evidence="1">Non-essential, abundant cell division factor that is required for proper Z-ring formation. It is recruited early to the divisome by direct interaction with FtsZ, stimulating Z-ring assembly and thereby promoting cell division earlier in the cell cycle. Its recruitment to the Z-ring requires functional FtsA or ZipA.</text>
</comment>
<comment type="subunit">
    <text evidence="1">Homodimer. The ends of the coiled-coil dimer bind to each other, forming polymers. Interacts with FtsZ.</text>
</comment>
<comment type="subcellular location">
    <subcellularLocation>
        <location evidence="1">Cytoplasm</location>
    </subcellularLocation>
    <text evidence="1">Localizes to the septum at mid-cell, in a FtsZ-like pattern.</text>
</comment>
<comment type="similarity">
    <text evidence="1">Belongs to the ZapB family.</text>
</comment>
<sequence>MSLEVFEKLEAKVQQAIDTITLLQMEIEELKEKNNSLTQEVQSAQHQREELERENNSLKEQQSGWQERLQALLGRMEEV</sequence>
<organism>
    <name type="scientific">Salmonella paratyphi A (strain AKU_12601)</name>
    <dbReference type="NCBI Taxonomy" id="554290"/>
    <lineage>
        <taxon>Bacteria</taxon>
        <taxon>Pseudomonadati</taxon>
        <taxon>Pseudomonadota</taxon>
        <taxon>Gammaproteobacteria</taxon>
        <taxon>Enterobacterales</taxon>
        <taxon>Enterobacteriaceae</taxon>
        <taxon>Salmonella</taxon>
    </lineage>
</organism>
<keyword id="KW-0131">Cell cycle</keyword>
<keyword id="KW-0132">Cell division</keyword>
<keyword id="KW-0175">Coiled coil</keyword>
<keyword id="KW-0963">Cytoplasm</keyword>
<keyword id="KW-0717">Septation</keyword>
<feature type="chain" id="PRO_1000138449" description="Cell division protein ZapB">
    <location>
        <begin position="1"/>
        <end position="79"/>
    </location>
</feature>
<feature type="region of interest" description="Disordered" evidence="2">
    <location>
        <begin position="36"/>
        <end position="63"/>
    </location>
</feature>
<feature type="coiled-coil region" evidence="1">
    <location>
        <begin position="3"/>
        <end position="79"/>
    </location>
</feature>
<feature type="compositionally biased region" description="Polar residues" evidence="2">
    <location>
        <begin position="36"/>
        <end position="45"/>
    </location>
</feature>
<feature type="compositionally biased region" description="Basic and acidic residues" evidence="2">
    <location>
        <begin position="46"/>
        <end position="57"/>
    </location>
</feature>
<name>ZAPB_SALPK</name>
<gene>
    <name evidence="1" type="primary">zapB</name>
    <name type="ordered locus">SSPA3658</name>
</gene>
<evidence type="ECO:0000255" key="1">
    <source>
        <dbReference type="HAMAP-Rule" id="MF_01196"/>
    </source>
</evidence>
<evidence type="ECO:0000256" key="2">
    <source>
        <dbReference type="SAM" id="MobiDB-lite"/>
    </source>
</evidence>
<dbReference type="EMBL" id="FM200053">
    <property type="protein sequence ID" value="CAR61940.1"/>
    <property type="molecule type" value="Genomic_DNA"/>
</dbReference>
<dbReference type="RefSeq" id="WP_000051370.1">
    <property type="nucleotide sequence ID" value="NC_011147.1"/>
</dbReference>
<dbReference type="SMR" id="B5BJK5"/>
<dbReference type="KEGG" id="sek:SSPA3658"/>
<dbReference type="HOGENOM" id="CLU_171174_2_0_6"/>
<dbReference type="Proteomes" id="UP000001869">
    <property type="component" value="Chromosome"/>
</dbReference>
<dbReference type="GO" id="GO:0005737">
    <property type="term" value="C:cytoplasm"/>
    <property type="evidence" value="ECO:0007669"/>
    <property type="project" value="UniProtKB-SubCell"/>
</dbReference>
<dbReference type="GO" id="GO:0000917">
    <property type="term" value="P:division septum assembly"/>
    <property type="evidence" value="ECO:0007669"/>
    <property type="project" value="UniProtKB-KW"/>
</dbReference>
<dbReference type="GO" id="GO:0043093">
    <property type="term" value="P:FtsZ-dependent cytokinesis"/>
    <property type="evidence" value="ECO:0007669"/>
    <property type="project" value="UniProtKB-UniRule"/>
</dbReference>
<dbReference type="FunFam" id="1.20.5.340:FF:000014">
    <property type="entry name" value="Cell division protein ZapB"/>
    <property type="match status" value="1"/>
</dbReference>
<dbReference type="Gene3D" id="1.20.5.340">
    <property type="match status" value="1"/>
</dbReference>
<dbReference type="HAMAP" id="MF_01196">
    <property type="entry name" value="ZapB"/>
    <property type="match status" value="1"/>
</dbReference>
<dbReference type="InterPro" id="IPR009252">
    <property type="entry name" value="Cell_div_ZapB"/>
</dbReference>
<dbReference type="NCBIfam" id="NF011951">
    <property type="entry name" value="PRK15422.1"/>
    <property type="match status" value="1"/>
</dbReference>
<dbReference type="Pfam" id="PF06005">
    <property type="entry name" value="ZapB"/>
    <property type="match status" value="1"/>
</dbReference>
<accession>B5BJK5</accession>
<reference key="1">
    <citation type="journal article" date="2009" name="BMC Genomics">
        <title>Pseudogene accumulation in the evolutionary histories of Salmonella enterica serovars Paratyphi A and Typhi.</title>
        <authorList>
            <person name="Holt K.E."/>
            <person name="Thomson N.R."/>
            <person name="Wain J."/>
            <person name="Langridge G.C."/>
            <person name="Hasan R."/>
            <person name="Bhutta Z.A."/>
            <person name="Quail M.A."/>
            <person name="Norbertczak H."/>
            <person name="Walker D."/>
            <person name="Simmonds M."/>
            <person name="White B."/>
            <person name="Bason N."/>
            <person name="Mungall K."/>
            <person name="Dougan G."/>
            <person name="Parkhill J."/>
        </authorList>
    </citation>
    <scope>NUCLEOTIDE SEQUENCE [LARGE SCALE GENOMIC DNA]</scope>
    <source>
        <strain>AKU_12601</strain>
    </source>
</reference>
<protein>
    <recommendedName>
        <fullName evidence="1">Cell division protein ZapB</fullName>
    </recommendedName>
</protein>
<proteinExistence type="inferred from homology"/>